<sequence>MQTPPTPLSSLTPHKLRLRRLGIDTYQEPVLYMHRDCRVCHSEGFEAQSRVELALGDRTIVATLNVVSGDFLAPDEAGLSEAAWRLLGAQEGDMVSPRHPAPIESLGHVRAKVYGRHLTQAAITAVIEDVTAGRYSDLQLAAFVTACAGDRLDQEETVSLTRAMVAAGERIDWGEGLVMDKHCVGGLPGNRTTMVIVPIVAACGLRMPKTSSRAITSPAGTADTMETLAPVDLDVAQIRRVVERTGGCVVWGGAVRLSPADDILIRVERPLDLDSQGQLVASILSKKVAAGSTHVLIDMPVGPTAKVRSAEAADLLGRLLGQVGQTLGLRMRVVQTDGLAPVGRGIGPALEARDVLAVLRNLATAPADLAQRSLLLAGEVLEFGGAAPAGGGLALASAVLADGRAWRKFQDICAAQGGLREPPVAAHQQAVHALRSGSVLAIDNRRLARIAKLAGAPGAACAGIDLHVRPGEFVERGQPLFTLHAATPGELAYALEYAASQAETVHVLEDA</sequence>
<keyword id="KW-0328">Glycosyltransferase</keyword>
<keyword id="KW-1185">Reference proteome</keyword>
<keyword id="KW-0808">Transferase</keyword>
<dbReference type="EC" id="2.4.2.4" evidence="1"/>
<dbReference type="EMBL" id="CP000316">
    <property type="protein sequence ID" value="ABE43145.1"/>
    <property type="molecule type" value="Genomic_DNA"/>
</dbReference>
<dbReference type="RefSeq" id="WP_011482146.1">
    <property type="nucleotide sequence ID" value="NC_007948.1"/>
</dbReference>
<dbReference type="SMR" id="Q12E97"/>
<dbReference type="STRING" id="296591.Bpro_1194"/>
<dbReference type="KEGG" id="pol:Bpro_1194"/>
<dbReference type="eggNOG" id="COG0213">
    <property type="taxonomic scope" value="Bacteria"/>
</dbReference>
<dbReference type="HOGENOM" id="CLU_025040_6_0_4"/>
<dbReference type="OrthoDB" id="341217at2"/>
<dbReference type="Proteomes" id="UP000001983">
    <property type="component" value="Chromosome"/>
</dbReference>
<dbReference type="GO" id="GO:0005829">
    <property type="term" value="C:cytosol"/>
    <property type="evidence" value="ECO:0007669"/>
    <property type="project" value="TreeGrafter"/>
</dbReference>
<dbReference type="GO" id="GO:0004645">
    <property type="term" value="F:1,4-alpha-oligoglucan phosphorylase activity"/>
    <property type="evidence" value="ECO:0007669"/>
    <property type="project" value="InterPro"/>
</dbReference>
<dbReference type="GO" id="GO:0009032">
    <property type="term" value="F:thymidine phosphorylase activity"/>
    <property type="evidence" value="ECO:0007669"/>
    <property type="project" value="UniProtKB-UniRule"/>
</dbReference>
<dbReference type="GO" id="GO:0006206">
    <property type="term" value="P:pyrimidine nucleobase metabolic process"/>
    <property type="evidence" value="ECO:0007669"/>
    <property type="project" value="InterPro"/>
</dbReference>
<dbReference type="GO" id="GO:0006213">
    <property type="term" value="P:pyrimidine nucleoside metabolic process"/>
    <property type="evidence" value="ECO:0007669"/>
    <property type="project" value="InterPro"/>
</dbReference>
<dbReference type="Gene3D" id="1.20.970.50">
    <property type="match status" value="1"/>
</dbReference>
<dbReference type="Gene3D" id="3.40.1030.10">
    <property type="entry name" value="Nucleoside phosphorylase/phosphoribosyltransferase catalytic domain"/>
    <property type="match status" value="1"/>
</dbReference>
<dbReference type="Gene3D" id="3.90.1170.30">
    <property type="entry name" value="Pyrimidine nucleoside phosphorylase-like, C-terminal domain"/>
    <property type="match status" value="1"/>
</dbReference>
<dbReference type="HAMAP" id="MF_00703">
    <property type="entry name" value="Thymid_phosp_2"/>
    <property type="match status" value="1"/>
</dbReference>
<dbReference type="InterPro" id="IPR000312">
    <property type="entry name" value="Glycosyl_Trfase_fam3"/>
</dbReference>
<dbReference type="InterPro" id="IPR017459">
    <property type="entry name" value="Glycosyl_Trfase_fam3_N_dom"/>
</dbReference>
<dbReference type="InterPro" id="IPR036320">
    <property type="entry name" value="Glycosyl_Trfase_fam3_N_dom_sf"/>
</dbReference>
<dbReference type="InterPro" id="IPR035902">
    <property type="entry name" value="Nuc_phospho_transferase"/>
</dbReference>
<dbReference type="InterPro" id="IPR036566">
    <property type="entry name" value="PYNP-like_C_sf"/>
</dbReference>
<dbReference type="InterPro" id="IPR013102">
    <property type="entry name" value="PYNP_C"/>
</dbReference>
<dbReference type="InterPro" id="IPR017872">
    <property type="entry name" value="Pyrmidine_PPase_CS"/>
</dbReference>
<dbReference type="InterPro" id="IPR028579">
    <property type="entry name" value="Thym_Pase_Put"/>
</dbReference>
<dbReference type="InterPro" id="IPR013466">
    <property type="entry name" value="Thymidine/AMP_Pase"/>
</dbReference>
<dbReference type="InterPro" id="IPR000053">
    <property type="entry name" value="Thymidine/pyrmidine_PPase"/>
</dbReference>
<dbReference type="NCBIfam" id="TIGR02645">
    <property type="entry name" value="ARCH_P_rylase"/>
    <property type="match status" value="1"/>
</dbReference>
<dbReference type="NCBIfam" id="NF003338">
    <property type="entry name" value="PRK04350.1"/>
    <property type="match status" value="1"/>
</dbReference>
<dbReference type="PANTHER" id="PTHR10515">
    <property type="entry name" value="THYMIDINE PHOSPHORYLASE"/>
    <property type="match status" value="1"/>
</dbReference>
<dbReference type="PANTHER" id="PTHR10515:SF0">
    <property type="entry name" value="THYMIDINE PHOSPHORYLASE"/>
    <property type="match status" value="1"/>
</dbReference>
<dbReference type="Pfam" id="PF02885">
    <property type="entry name" value="Glycos_trans_3N"/>
    <property type="match status" value="1"/>
</dbReference>
<dbReference type="Pfam" id="PF00591">
    <property type="entry name" value="Glycos_transf_3"/>
    <property type="match status" value="1"/>
</dbReference>
<dbReference type="Pfam" id="PF07831">
    <property type="entry name" value="PYNP_C"/>
    <property type="match status" value="1"/>
</dbReference>
<dbReference type="SMART" id="SM00941">
    <property type="entry name" value="PYNP_C"/>
    <property type="match status" value="1"/>
</dbReference>
<dbReference type="SUPFAM" id="SSF52418">
    <property type="entry name" value="Nucleoside phosphorylase/phosphoribosyltransferase catalytic domain"/>
    <property type="match status" value="1"/>
</dbReference>
<dbReference type="SUPFAM" id="SSF47648">
    <property type="entry name" value="Nucleoside phosphorylase/phosphoribosyltransferase N-terminal domain"/>
    <property type="match status" value="1"/>
</dbReference>
<dbReference type="SUPFAM" id="SSF54680">
    <property type="entry name" value="Pyrimidine nucleoside phosphorylase C-terminal domain"/>
    <property type="match status" value="1"/>
</dbReference>
<dbReference type="PROSITE" id="PS00647">
    <property type="entry name" value="THYMID_PHOSPHORYLASE"/>
    <property type="match status" value="1"/>
</dbReference>
<accession>Q12E97</accession>
<name>TYPH_POLSJ</name>
<proteinExistence type="inferred from homology"/>
<organism>
    <name type="scientific">Polaromonas sp. (strain JS666 / ATCC BAA-500)</name>
    <dbReference type="NCBI Taxonomy" id="296591"/>
    <lineage>
        <taxon>Bacteria</taxon>
        <taxon>Pseudomonadati</taxon>
        <taxon>Pseudomonadota</taxon>
        <taxon>Betaproteobacteria</taxon>
        <taxon>Burkholderiales</taxon>
        <taxon>Comamonadaceae</taxon>
        <taxon>Polaromonas</taxon>
    </lineage>
</organism>
<evidence type="ECO:0000255" key="1">
    <source>
        <dbReference type="HAMAP-Rule" id="MF_00703"/>
    </source>
</evidence>
<reference key="1">
    <citation type="journal article" date="2008" name="Appl. Environ. Microbiol.">
        <title>The genome of Polaromonas sp. strain JS666: insights into the evolution of a hydrocarbon- and xenobiotic-degrading bacterium, and features of relevance to biotechnology.</title>
        <authorList>
            <person name="Mattes T.E."/>
            <person name="Alexander A.K."/>
            <person name="Richardson P.M."/>
            <person name="Munk A.C."/>
            <person name="Han C.S."/>
            <person name="Stothard P."/>
            <person name="Coleman N.V."/>
        </authorList>
    </citation>
    <scope>NUCLEOTIDE SEQUENCE [LARGE SCALE GENOMIC DNA]</scope>
    <source>
        <strain>JS666 / ATCC BAA-500</strain>
    </source>
</reference>
<protein>
    <recommendedName>
        <fullName evidence="1">Putative thymidine phosphorylase</fullName>
        <ecNumber evidence="1">2.4.2.4</ecNumber>
    </recommendedName>
    <alternativeName>
        <fullName evidence="1">TdRPase</fullName>
    </alternativeName>
</protein>
<gene>
    <name type="ordered locus">Bpro_1194</name>
</gene>
<comment type="catalytic activity">
    <reaction evidence="1">
        <text>thymidine + phosphate = 2-deoxy-alpha-D-ribose 1-phosphate + thymine</text>
        <dbReference type="Rhea" id="RHEA:16037"/>
        <dbReference type="ChEBI" id="CHEBI:17748"/>
        <dbReference type="ChEBI" id="CHEBI:17821"/>
        <dbReference type="ChEBI" id="CHEBI:43474"/>
        <dbReference type="ChEBI" id="CHEBI:57259"/>
        <dbReference type="EC" id="2.4.2.4"/>
    </reaction>
</comment>
<comment type="similarity">
    <text evidence="1">Belongs to the thymidine/pyrimidine-nucleoside phosphorylase family. Type 2 subfamily.</text>
</comment>
<feature type="chain" id="PRO_0000314706" description="Putative thymidine phosphorylase">
    <location>
        <begin position="1"/>
        <end position="511"/>
    </location>
</feature>